<comment type="function">
    <text evidence="1">Endonuclease that specifically degrades the RNA of RNA-DNA hybrids.</text>
</comment>
<comment type="catalytic activity">
    <reaction evidence="1">
        <text>Endonucleolytic cleavage to 5'-phosphomonoester.</text>
        <dbReference type="EC" id="3.1.26.4"/>
    </reaction>
</comment>
<comment type="cofactor">
    <cofactor evidence="1">
        <name>Mg(2+)</name>
        <dbReference type="ChEBI" id="CHEBI:18420"/>
    </cofactor>
    <text evidence="1">Binds 1 Mg(2+) ion per subunit. May bind a second metal ion at a regulatory site, or after substrate binding.</text>
</comment>
<comment type="subunit">
    <text evidence="1">Monomer.</text>
</comment>
<comment type="subcellular location">
    <subcellularLocation>
        <location evidence="1">Cytoplasm</location>
    </subcellularLocation>
</comment>
<comment type="similarity">
    <text evidence="1">Belongs to the RNase H family.</text>
</comment>
<accession>Q0VQ76</accession>
<reference key="1">
    <citation type="journal article" date="2006" name="Nat. Biotechnol.">
        <title>Genome sequence of the ubiquitous hydrocarbon-degrading marine bacterium Alcanivorax borkumensis.</title>
        <authorList>
            <person name="Schneiker S."/>
            <person name="Martins dos Santos V.A.P."/>
            <person name="Bartels D."/>
            <person name="Bekel T."/>
            <person name="Brecht M."/>
            <person name="Buhrmester J."/>
            <person name="Chernikova T.N."/>
            <person name="Denaro R."/>
            <person name="Ferrer M."/>
            <person name="Gertler C."/>
            <person name="Goesmann A."/>
            <person name="Golyshina O.V."/>
            <person name="Kaminski F."/>
            <person name="Khachane A.N."/>
            <person name="Lang S."/>
            <person name="Linke B."/>
            <person name="McHardy A.C."/>
            <person name="Meyer F."/>
            <person name="Nechitaylo T."/>
            <person name="Puehler A."/>
            <person name="Regenhardt D."/>
            <person name="Rupp O."/>
            <person name="Sabirova J.S."/>
            <person name="Selbitschka W."/>
            <person name="Yakimov M.M."/>
            <person name="Timmis K.N."/>
            <person name="Vorhoelter F.-J."/>
            <person name="Weidner S."/>
            <person name="Kaiser O."/>
            <person name="Golyshin P.N."/>
        </authorList>
    </citation>
    <scope>NUCLEOTIDE SEQUENCE [LARGE SCALE GENOMIC DNA]</scope>
    <source>
        <strain>ATCC 700651 / DSM 11573 / NCIMB 13689 / SK2</strain>
    </source>
</reference>
<name>RNH_ALCBS</name>
<proteinExistence type="inferred from homology"/>
<gene>
    <name evidence="1" type="primary">rnhA</name>
    <name type="ordered locus">ABO_1224</name>
</gene>
<organism>
    <name type="scientific">Alcanivorax borkumensis (strain ATCC 700651 / DSM 11573 / NCIMB 13689 / SK2)</name>
    <dbReference type="NCBI Taxonomy" id="393595"/>
    <lineage>
        <taxon>Bacteria</taxon>
        <taxon>Pseudomonadati</taxon>
        <taxon>Pseudomonadota</taxon>
        <taxon>Gammaproteobacteria</taxon>
        <taxon>Oceanospirillales</taxon>
        <taxon>Alcanivoracaceae</taxon>
        <taxon>Alcanivorax</taxon>
    </lineage>
</organism>
<dbReference type="EC" id="3.1.26.4" evidence="1"/>
<dbReference type="EMBL" id="AM286690">
    <property type="protein sequence ID" value="CAL16672.1"/>
    <property type="molecule type" value="Genomic_DNA"/>
</dbReference>
<dbReference type="RefSeq" id="WP_011588507.1">
    <property type="nucleotide sequence ID" value="NC_008260.1"/>
</dbReference>
<dbReference type="SMR" id="Q0VQ76"/>
<dbReference type="STRING" id="393595.ABO_1224"/>
<dbReference type="KEGG" id="abo:ABO_1224"/>
<dbReference type="eggNOG" id="COG0328">
    <property type="taxonomic scope" value="Bacteria"/>
</dbReference>
<dbReference type="HOGENOM" id="CLU_030894_6_0_6"/>
<dbReference type="OrthoDB" id="7845843at2"/>
<dbReference type="Proteomes" id="UP000008871">
    <property type="component" value="Chromosome"/>
</dbReference>
<dbReference type="GO" id="GO:0005737">
    <property type="term" value="C:cytoplasm"/>
    <property type="evidence" value="ECO:0007669"/>
    <property type="project" value="UniProtKB-SubCell"/>
</dbReference>
<dbReference type="GO" id="GO:0000287">
    <property type="term" value="F:magnesium ion binding"/>
    <property type="evidence" value="ECO:0007669"/>
    <property type="project" value="UniProtKB-UniRule"/>
</dbReference>
<dbReference type="GO" id="GO:0003676">
    <property type="term" value="F:nucleic acid binding"/>
    <property type="evidence" value="ECO:0007669"/>
    <property type="project" value="InterPro"/>
</dbReference>
<dbReference type="GO" id="GO:0004523">
    <property type="term" value="F:RNA-DNA hybrid ribonuclease activity"/>
    <property type="evidence" value="ECO:0007669"/>
    <property type="project" value="UniProtKB-UniRule"/>
</dbReference>
<dbReference type="GO" id="GO:0043137">
    <property type="term" value="P:DNA replication, removal of RNA primer"/>
    <property type="evidence" value="ECO:0007669"/>
    <property type="project" value="TreeGrafter"/>
</dbReference>
<dbReference type="CDD" id="cd09278">
    <property type="entry name" value="RNase_HI_prokaryote_like"/>
    <property type="match status" value="1"/>
</dbReference>
<dbReference type="FunFam" id="3.30.420.10:FF:000008">
    <property type="entry name" value="Ribonuclease H"/>
    <property type="match status" value="1"/>
</dbReference>
<dbReference type="Gene3D" id="3.30.420.10">
    <property type="entry name" value="Ribonuclease H-like superfamily/Ribonuclease H"/>
    <property type="match status" value="1"/>
</dbReference>
<dbReference type="HAMAP" id="MF_00042">
    <property type="entry name" value="RNase_H"/>
    <property type="match status" value="1"/>
</dbReference>
<dbReference type="InterPro" id="IPR050092">
    <property type="entry name" value="RNase_H"/>
</dbReference>
<dbReference type="InterPro" id="IPR012337">
    <property type="entry name" value="RNaseH-like_sf"/>
</dbReference>
<dbReference type="InterPro" id="IPR002156">
    <property type="entry name" value="RNaseH_domain"/>
</dbReference>
<dbReference type="InterPro" id="IPR036397">
    <property type="entry name" value="RNaseH_sf"/>
</dbReference>
<dbReference type="InterPro" id="IPR022892">
    <property type="entry name" value="RNaseHI"/>
</dbReference>
<dbReference type="NCBIfam" id="NF001236">
    <property type="entry name" value="PRK00203.1"/>
    <property type="match status" value="1"/>
</dbReference>
<dbReference type="PANTHER" id="PTHR10642">
    <property type="entry name" value="RIBONUCLEASE H1"/>
    <property type="match status" value="1"/>
</dbReference>
<dbReference type="PANTHER" id="PTHR10642:SF26">
    <property type="entry name" value="RIBONUCLEASE H1"/>
    <property type="match status" value="1"/>
</dbReference>
<dbReference type="Pfam" id="PF00075">
    <property type="entry name" value="RNase_H"/>
    <property type="match status" value="1"/>
</dbReference>
<dbReference type="SUPFAM" id="SSF53098">
    <property type="entry name" value="Ribonuclease H-like"/>
    <property type="match status" value="1"/>
</dbReference>
<dbReference type="PROSITE" id="PS50879">
    <property type="entry name" value="RNASE_H_1"/>
    <property type="match status" value="1"/>
</dbReference>
<keyword id="KW-0963">Cytoplasm</keyword>
<keyword id="KW-0255">Endonuclease</keyword>
<keyword id="KW-0378">Hydrolase</keyword>
<keyword id="KW-0460">Magnesium</keyword>
<keyword id="KW-0479">Metal-binding</keyword>
<keyword id="KW-0540">Nuclease</keyword>
<keyword id="KW-1185">Reference proteome</keyword>
<feature type="chain" id="PRO_0000332555" description="Ribonuclease H">
    <location>
        <begin position="1"/>
        <end position="151"/>
    </location>
</feature>
<feature type="domain" description="RNase H type-1" evidence="2">
    <location>
        <begin position="1"/>
        <end position="141"/>
    </location>
</feature>
<feature type="binding site" evidence="1">
    <location>
        <position position="9"/>
    </location>
    <ligand>
        <name>Mg(2+)</name>
        <dbReference type="ChEBI" id="CHEBI:18420"/>
        <label>1</label>
    </ligand>
</feature>
<feature type="binding site" evidence="1">
    <location>
        <position position="9"/>
    </location>
    <ligand>
        <name>Mg(2+)</name>
        <dbReference type="ChEBI" id="CHEBI:18420"/>
        <label>2</label>
    </ligand>
</feature>
<feature type="binding site" evidence="1">
    <location>
        <position position="47"/>
    </location>
    <ligand>
        <name>Mg(2+)</name>
        <dbReference type="ChEBI" id="CHEBI:18420"/>
        <label>1</label>
    </ligand>
</feature>
<feature type="binding site" evidence="1">
    <location>
        <position position="69"/>
    </location>
    <ligand>
        <name>Mg(2+)</name>
        <dbReference type="ChEBI" id="CHEBI:18420"/>
        <label>1</label>
    </ligand>
</feature>
<feature type="binding site" evidence="1">
    <location>
        <position position="133"/>
    </location>
    <ligand>
        <name>Mg(2+)</name>
        <dbReference type="ChEBI" id="CHEBI:18420"/>
        <label>2</label>
    </ligand>
</feature>
<sequence length="151" mass="16861">MKNVIIYTDGACRGNPGPGGWGAILLYGDKEKELFGGEPETTNNRMELMAAIVALETLNTPCQVVLTTDSKYVMDGITQWMANWKKRGWKTASKQPVKNVDLWQRLDAAVQRHDIDWQWVKGHSGHPGNERADALANRGIDEMKHKQGQAS</sequence>
<evidence type="ECO:0000255" key="1">
    <source>
        <dbReference type="HAMAP-Rule" id="MF_00042"/>
    </source>
</evidence>
<evidence type="ECO:0000255" key="2">
    <source>
        <dbReference type="PROSITE-ProRule" id="PRU00408"/>
    </source>
</evidence>
<protein>
    <recommendedName>
        <fullName evidence="1">Ribonuclease H</fullName>
        <shortName evidence="1">RNase H</shortName>
        <ecNumber evidence="1">3.1.26.4</ecNumber>
    </recommendedName>
</protein>